<comment type="function">
    <text evidence="1">Required for the processing of the 20S rRNA-precursor to mature 18S rRNA in a late step of the maturation of 40S ribosomal subunits. Has a physiological role leading to 18S rRNA stability (By similarity).</text>
</comment>
<comment type="subunit">
    <text>Component of the small ribosomal subunit. Mature ribosomes consist of a small (40S) and a large (60S) subunit. The 40S subunit contains about 33 different proteins and 1 molecule of RNA (18S). The 60S subunit contains about 49 different proteins and 3 molecules of RNA (25S, 5.8S and 5S).</text>
</comment>
<comment type="subcellular location">
    <subcellularLocation>
        <location evidence="1">Cytoplasm</location>
    </subcellularLocation>
</comment>
<comment type="similarity">
    <text evidence="2">Belongs to the eukaryotic ribosomal protein eS21 family.</text>
</comment>
<name>RS21_EREGS</name>
<reference key="1">
    <citation type="journal article" date="2004" name="Science">
        <title>The Ashbya gossypii genome as a tool for mapping the ancient Saccharomyces cerevisiae genome.</title>
        <authorList>
            <person name="Dietrich F.S."/>
            <person name="Voegeli S."/>
            <person name="Brachat S."/>
            <person name="Lerch A."/>
            <person name="Gates K."/>
            <person name="Steiner S."/>
            <person name="Mohr C."/>
            <person name="Poehlmann R."/>
            <person name="Luedi P."/>
            <person name="Choi S."/>
            <person name="Wing R.A."/>
            <person name="Flavier A."/>
            <person name="Gaffney T.D."/>
            <person name="Philippsen P."/>
        </authorList>
    </citation>
    <scope>NUCLEOTIDE SEQUENCE [LARGE SCALE GENOMIC DNA]</scope>
    <source>
        <strain>ATCC 10895 / CBS 109.51 / FGSC 9923 / NRRL Y-1056</strain>
    </source>
</reference>
<reference key="2">
    <citation type="journal article" date="2013" name="G3 (Bethesda)">
        <title>Genomes of Ashbya fungi isolated from insects reveal four mating-type loci, numerous translocations, lack of transposons, and distinct gene duplications.</title>
        <authorList>
            <person name="Dietrich F.S."/>
            <person name="Voegeli S."/>
            <person name="Kuo S."/>
            <person name="Philippsen P."/>
        </authorList>
    </citation>
    <scope>GENOME REANNOTATION</scope>
    <source>
        <strain>ATCC 10895 / CBS 109.51 / FGSC 9923 / NRRL Y-1056</strain>
    </source>
</reference>
<proteinExistence type="inferred from homology"/>
<dbReference type="EMBL" id="AE016816">
    <property type="protein sequence ID" value="AAS51481.1"/>
    <property type="molecule type" value="Genomic_DNA"/>
</dbReference>
<dbReference type="RefSeq" id="NP_983657.1">
    <property type="nucleotide sequence ID" value="NM_209010.1"/>
</dbReference>
<dbReference type="SMR" id="Q75BL6"/>
<dbReference type="FunCoup" id="Q75BL6">
    <property type="interactions" value="1007"/>
</dbReference>
<dbReference type="STRING" id="284811.Q75BL6"/>
<dbReference type="EnsemblFungi" id="AAS51481">
    <property type="protein sequence ID" value="AAS51481"/>
    <property type="gene ID" value="AGOS_ACR255C"/>
</dbReference>
<dbReference type="GeneID" id="4619792"/>
<dbReference type="KEGG" id="ago:AGOS_ACR255C"/>
<dbReference type="eggNOG" id="KOG3486">
    <property type="taxonomic scope" value="Eukaryota"/>
</dbReference>
<dbReference type="HOGENOM" id="CLU_167122_2_0_1"/>
<dbReference type="InParanoid" id="Q75BL6"/>
<dbReference type="OMA" id="GESDACM"/>
<dbReference type="OrthoDB" id="278325at2759"/>
<dbReference type="Proteomes" id="UP000000591">
    <property type="component" value="Chromosome III"/>
</dbReference>
<dbReference type="GO" id="GO:0022627">
    <property type="term" value="C:cytosolic small ribosomal subunit"/>
    <property type="evidence" value="ECO:0000318"/>
    <property type="project" value="GO_Central"/>
</dbReference>
<dbReference type="GO" id="GO:0003735">
    <property type="term" value="F:structural constituent of ribosome"/>
    <property type="evidence" value="ECO:0000318"/>
    <property type="project" value="GO_Central"/>
</dbReference>
<dbReference type="GO" id="GO:0000447">
    <property type="term" value="P:endonucleolytic cleavage in ITS1 to separate SSU-rRNA from 5.8S rRNA and LSU-rRNA from tricistronic rRNA transcript (SSU-rRNA, 5.8S rRNA, LSU-rRNA)"/>
    <property type="evidence" value="ECO:0000318"/>
    <property type="project" value="GO_Central"/>
</dbReference>
<dbReference type="GO" id="GO:0000461">
    <property type="term" value="P:endonucleolytic cleavage to generate mature 3'-end of SSU-rRNA from (SSU-rRNA, 5.8S rRNA, LSU-rRNA)"/>
    <property type="evidence" value="ECO:0000318"/>
    <property type="project" value="GO_Central"/>
</dbReference>
<dbReference type="GO" id="GO:0006412">
    <property type="term" value="P:translation"/>
    <property type="evidence" value="ECO:0007669"/>
    <property type="project" value="InterPro"/>
</dbReference>
<dbReference type="FunFam" id="3.30.1230.20:FF:000001">
    <property type="entry name" value="40S ribosomal protein S21"/>
    <property type="match status" value="1"/>
</dbReference>
<dbReference type="Gene3D" id="3.30.1230.20">
    <property type="match status" value="1"/>
</dbReference>
<dbReference type="InterPro" id="IPR001931">
    <property type="entry name" value="Ribosomal_eS21"/>
</dbReference>
<dbReference type="InterPro" id="IPR018279">
    <property type="entry name" value="Ribosomal_eS21_CS"/>
</dbReference>
<dbReference type="InterPro" id="IPR038579">
    <property type="entry name" value="Ribosomal_eS21_sf"/>
</dbReference>
<dbReference type="PANTHER" id="PTHR10442">
    <property type="entry name" value="40S RIBOSOMAL PROTEIN S21"/>
    <property type="match status" value="1"/>
</dbReference>
<dbReference type="Pfam" id="PF01249">
    <property type="entry name" value="Ribosomal_S21e"/>
    <property type="match status" value="1"/>
</dbReference>
<dbReference type="PIRSF" id="PIRSF002148">
    <property type="entry name" value="Ribosomal_S21e"/>
    <property type="match status" value="1"/>
</dbReference>
<dbReference type="PROSITE" id="PS00996">
    <property type="entry name" value="RIBOSOMAL_S21E"/>
    <property type="match status" value="1"/>
</dbReference>
<organism>
    <name type="scientific">Eremothecium gossypii (strain ATCC 10895 / CBS 109.51 / FGSC 9923 / NRRL Y-1056)</name>
    <name type="common">Yeast</name>
    <name type="synonym">Ashbya gossypii</name>
    <dbReference type="NCBI Taxonomy" id="284811"/>
    <lineage>
        <taxon>Eukaryota</taxon>
        <taxon>Fungi</taxon>
        <taxon>Dikarya</taxon>
        <taxon>Ascomycota</taxon>
        <taxon>Saccharomycotina</taxon>
        <taxon>Saccharomycetes</taxon>
        <taxon>Saccharomycetales</taxon>
        <taxon>Saccharomycetaceae</taxon>
        <taxon>Eremothecium</taxon>
    </lineage>
</organism>
<keyword id="KW-0963">Cytoplasm</keyword>
<keyword id="KW-1185">Reference proteome</keyword>
<keyword id="KW-0687">Ribonucleoprotein</keyword>
<keyword id="KW-0689">Ribosomal protein</keyword>
<keyword id="KW-0698">rRNA processing</keyword>
<feature type="chain" id="PRO_0000194754" description="Small ribosomal subunit protein eS21">
    <location>
        <begin position="1"/>
        <end position="87"/>
    </location>
</feature>
<accession>Q75BL6</accession>
<evidence type="ECO:0000250" key="1"/>
<evidence type="ECO:0000305" key="2"/>
<protein>
    <recommendedName>
        <fullName evidence="2">Small ribosomal subunit protein eS21</fullName>
    </recommendedName>
    <alternativeName>
        <fullName>40S ribosomal protein S21</fullName>
    </alternativeName>
</protein>
<sequence length="87" mass="9725">MENDKGQLVELYVPRKCSATNRIIKAKDHGSVQINIAQVDENGHAVPGEYITYALSGYVRARGEADDSMNRLAQKDGLLKNVWSYSR</sequence>
<gene>
    <name type="primary">RPS21</name>
    <name type="ordered locus">ACR255C</name>
</gene>